<organism>
    <name type="scientific">Salinispora arenicola (strain CNS-205)</name>
    <dbReference type="NCBI Taxonomy" id="391037"/>
    <lineage>
        <taxon>Bacteria</taxon>
        <taxon>Bacillati</taxon>
        <taxon>Actinomycetota</taxon>
        <taxon>Actinomycetes</taxon>
        <taxon>Micromonosporales</taxon>
        <taxon>Micromonosporaceae</taxon>
        <taxon>Salinispora</taxon>
    </lineage>
</organism>
<protein>
    <recommendedName>
        <fullName evidence="1">Large ribosomal subunit protein bL9</fullName>
    </recommendedName>
    <alternativeName>
        <fullName evidence="2">50S ribosomal protein L9</fullName>
    </alternativeName>
</protein>
<name>RL9_SALAI</name>
<evidence type="ECO:0000255" key="1">
    <source>
        <dbReference type="HAMAP-Rule" id="MF_00503"/>
    </source>
</evidence>
<evidence type="ECO:0000305" key="2"/>
<reference key="1">
    <citation type="submission" date="2007-10" db="EMBL/GenBank/DDBJ databases">
        <title>Complete sequence of Salinispora arenicola CNS-205.</title>
        <authorList>
            <consortium name="US DOE Joint Genome Institute"/>
            <person name="Copeland A."/>
            <person name="Lucas S."/>
            <person name="Lapidus A."/>
            <person name="Barry K."/>
            <person name="Glavina del Rio T."/>
            <person name="Dalin E."/>
            <person name="Tice H."/>
            <person name="Pitluck S."/>
            <person name="Foster B."/>
            <person name="Schmutz J."/>
            <person name="Larimer F."/>
            <person name="Land M."/>
            <person name="Hauser L."/>
            <person name="Kyrpides N."/>
            <person name="Ivanova N."/>
            <person name="Jensen P.R."/>
            <person name="Moore B.S."/>
            <person name="Penn K."/>
            <person name="Jenkins C."/>
            <person name="Udwary D."/>
            <person name="Xiang L."/>
            <person name="Gontang E."/>
            <person name="Richardson P."/>
        </authorList>
    </citation>
    <scope>NUCLEOTIDE SEQUENCE [LARGE SCALE GENOMIC DNA]</scope>
    <source>
        <strain>CNS-205</strain>
    </source>
</reference>
<accession>A8LXG0</accession>
<dbReference type="EMBL" id="CP000850">
    <property type="protein sequence ID" value="ABW00809.1"/>
    <property type="molecule type" value="Genomic_DNA"/>
</dbReference>
<dbReference type="SMR" id="A8LXG0"/>
<dbReference type="STRING" id="391037.Sare_5065"/>
<dbReference type="KEGG" id="saq:Sare_5065"/>
<dbReference type="PATRIC" id="fig|391037.6.peg.5114"/>
<dbReference type="eggNOG" id="COG0359">
    <property type="taxonomic scope" value="Bacteria"/>
</dbReference>
<dbReference type="HOGENOM" id="CLU_078938_5_1_11"/>
<dbReference type="OrthoDB" id="9788336at2"/>
<dbReference type="GO" id="GO:1990904">
    <property type="term" value="C:ribonucleoprotein complex"/>
    <property type="evidence" value="ECO:0007669"/>
    <property type="project" value="UniProtKB-KW"/>
</dbReference>
<dbReference type="GO" id="GO:0005840">
    <property type="term" value="C:ribosome"/>
    <property type="evidence" value="ECO:0007669"/>
    <property type="project" value="UniProtKB-KW"/>
</dbReference>
<dbReference type="GO" id="GO:0019843">
    <property type="term" value="F:rRNA binding"/>
    <property type="evidence" value="ECO:0007669"/>
    <property type="project" value="UniProtKB-UniRule"/>
</dbReference>
<dbReference type="GO" id="GO:0003735">
    <property type="term" value="F:structural constituent of ribosome"/>
    <property type="evidence" value="ECO:0007669"/>
    <property type="project" value="InterPro"/>
</dbReference>
<dbReference type="GO" id="GO:0006412">
    <property type="term" value="P:translation"/>
    <property type="evidence" value="ECO:0007669"/>
    <property type="project" value="UniProtKB-UniRule"/>
</dbReference>
<dbReference type="FunFam" id="3.40.5.10:FF:000003">
    <property type="entry name" value="50S ribosomal protein L9"/>
    <property type="match status" value="1"/>
</dbReference>
<dbReference type="Gene3D" id="3.10.430.100">
    <property type="entry name" value="Ribosomal protein L9, C-terminal domain"/>
    <property type="match status" value="1"/>
</dbReference>
<dbReference type="Gene3D" id="3.40.5.10">
    <property type="entry name" value="Ribosomal protein L9, N-terminal domain"/>
    <property type="match status" value="1"/>
</dbReference>
<dbReference type="HAMAP" id="MF_00503">
    <property type="entry name" value="Ribosomal_bL9"/>
    <property type="match status" value="1"/>
</dbReference>
<dbReference type="InterPro" id="IPR000244">
    <property type="entry name" value="Ribosomal_bL9"/>
</dbReference>
<dbReference type="InterPro" id="IPR009027">
    <property type="entry name" value="Ribosomal_bL9/RNase_H1_N"/>
</dbReference>
<dbReference type="InterPro" id="IPR020594">
    <property type="entry name" value="Ribosomal_bL9_bac/chp"/>
</dbReference>
<dbReference type="InterPro" id="IPR020069">
    <property type="entry name" value="Ribosomal_bL9_C"/>
</dbReference>
<dbReference type="InterPro" id="IPR036791">
    <property type="entry name" value="Ribosomal_bL9_C_sf"/>
</dbReference>
<dbReference type="InterPro" id="IPR020070">
    <property type="entry name" value="Ribosomal_bL9_N"/>
</dbReference>
<dbReference type="InterPro" id="IPR036935">
    <property type="entry name" value="Ribosomal_bL9_N_sf"/>
</dbReference>
<dbReference type="NCBIfam" id="TIGR00158">
    <property type="entry name" value="L9"/>
    <property type="match status" value="1"/>
</dbReference>
<dbReference type="PANTHER" id="PTHR21368">
    <property type="entry name" value="50S RIBOSOMAL PROTEIN L9"/>
    <property type="match status" value="1"/>
</dbReference>
<dbReference type="Pfam" id="PF03948">
    <property type="entry name" value="Ribosomal_L9_C"/>
    <property type="match status" value="1"/>
</dbReference>
<dbReference type="Pfam" id="PF01281">
    <property type="entry name" value="Ribosomal_L9_N"/>
    <property type="match status" value="1"/>
</dbReference>
<dbReference type="SUPFAM" id="SSF55658">
    <property type="entry name" value="L9 N-domain-like"/>
    <property type="match status" value="1"/>
</dbReference>
<dbReference type="SUPFAM" id="SSF55653">
    <property type="entry name" value="Ribosomal protein L9 C-domain"/>
    <property type="match status" value="1"/>
</dbReference>
<dbReference type="PROSITE" id="PS00651">
    <property type="entry name" value="RIBOSOMAL_L9"/>
    <property type="match status" value="1"/>
</dbReference>
<feature type="chain" id="PRO_1000081496" description="Large ribosomal subunit protein bL9">
    <location>
        <begin position="1"/>
        <end position="148"/>
    </location>
</feature>
<gene>
    <name evidence="1" type="primary">rplI</name>
    <name type="ordered locus">Sare_5065</name>
</gene>
<comment type="function">
    <text evidence="1">Binds to the 23S rRNA.</text>
</comment>
<comment type="similarity">
    <text evidence="1">Belongs to the bacterial ribosomal protein bL9 family.</text>
</comment>
<proteinExistence type="inferred from homology"/>
<keyword id="KW-0687">Ribonucleoprotein</keyword>
<keyword id="KW-0689">Ribosomal protein</keyword>
<keyword id="KW-0694">RNA-binding</keyword>
<keyword id="KW-0699">rRNA-binding</keyword>
<sequence length="148" mass="15779">MKIILTQEVSGLGAPGDIVEVKNGYGRNYLLPQGFAIAWTKGAEKQVTLIKRARSAREIRDLGHANEVKGQLEGLKVTLKARAGDGGRLFGSVTAAEIVAAVKAAGGPTLDRRRLELPSHIKSIGSYPVRIKLHPEVTAAFDLSVVQG</sequence>